<protein>
    <recommendedName>
        <fullName evidence="1">Leucine--tRNA ligase</fullName>
        <ecNumber evidence="1">6.1.1.4</ecNumber>
    </recommendedName>
    <alternativeName>
        <fullName evidence="1">Leucyl-tRNA synthetase</fullName>
        <shortName evidence="1">LeuRS</shortName>
    </alternativeName>
</protein>
<sequence length="812" mass="93037">MGNYGTNIDRKWQNKWEDSNLYHFDTNNLDKKLYVLEMFSYPSGSNLHAGHWFNYGPSDSWARFKRMQGFNVFQPMGFDSFGLPAENYAIKTGVHPKDSTMKNIETMTKQLKSMGAMFHWDNEVITSEPEYYKWTQWMFLQLYKNNLAYRKNAPVNWCPSCNTVLANEQVLDGACERCSSDVIKKDLTQWFFKITDYAEELLEKLDDLDWPENTKSMQKHWIGKSIGAQLTFKIVDSDLSFDIFTTRADTLFGVTYAVLAPENPLVDKITKEDHKAEIEAYKEQAKKQSEIERQSITREKTGVFTGSYAINPINGKKVPVWVGDYVLSTYGTGAVMAVPAHDERDFEFAKKHNLPIEKVIEGGETLPYTEDGIMINSEEFNGLESSKGRSAVVEKLEKENLGVKKINYRLRDWLVSRQRYWGAPIPIVYCDKCGTVAVPEEQLPVKLPYDVEFTPDGKSPLSKCDSFVNTTCPTCGGPAKREVDTLDTFVCSSWYFLRYADNKNSEKAFDPKIINEILPVDKYVGGPEHACMHLLYARFFTKALRDMGYLNFDEPFSSLTHQGLILGPDGLKMSKSKGNTISPDDYIDEFGSDVFRMYLMFGFDYTEGGAWSDEGIKSVSRFVDRVERTLASCRYYINNPSDDKITIDNNEKDLNFVRHNSIKSITEDAEKMQFNTCIARLMEYTNALSKYINEDNKNSKFLKECVEDFIILIAPFAPHFSEEQWELLGMTYSVFNEKWPQFDSKALVKDEIEIAVQVNGKIRDRITIASGLDEESIKETALNSEDVKKYTDGKNIVKIIIIKGRLVNIVVK</sequence>
<feature type="chain" id="PRO_0000152004" description="Leucine--tRNA ligase">
    <location>
        <begin position="1"/>
        <end position="812"/>
    </location>
</feature>
<feature type="short sequence motif" description="'HIGH' region">
    <location>
        <begin position="40"/>
        <end position="51"/>
    </location>
</feature>
<feature type="short sequence motif" description="'KMSKS' region">
    <location>
        <begin position="572"/>
        <end position="576"/>
    </location>
</feature>
<feature type="binding site" evidence="1">
    <location>
        <position position="575"/>
    </location>
    <ligand>
        <name>ATP</name>
        <dbReference type="ChEBI" id="CHEBI:30616"/>
    </ligand>
</feature>
<reference key="1">
    <citation type="journal article" date="2003" name="Proc. Natl. Acad. Sci. U.S.A.">
        <title>The genome sequence of Clostridium tetani, the causative agent of tetanus disease.</title>
        <authorList>
            <person name="Brueggemann H."/>
            <person name="Baeumer S."/>
            <person name="Fricke W.F."/>
            <person name="Wiezer A."/>
            <person name="Liesegang H."/>
            <person name="Decker I."/>
            <person name="Herzberg C."/>
            <person name="Martinez-Arias R."/>
            <person name="Merkl R."/>
            <person name="Henne A."/>
            <person name="Gottschalk G."/>
        </authorList>
    </citation>
    <scope>NUCLEOTIDE SEQUENCE [LARGE SCALE GENOMIC DNA]</scope>
    <source>
        <strain>Massachusetts / E88</strain>
    </source>
</reference>
<gene>
    <name evidence="1" type="primary">leuS</name>
    <name type="ordered locus">CTC_00337</name>
</gene>
<name>SYL_CLOTE</name>
<accession>Q898V2</accession>
<proteinExistence type="inferred from homology"/>
<keyword id="KW-0030">Aminoacyl-tRNA synthetase</keyword>
<keyword id="KW-0067">ATP-binding</keyword>
<keyword id="KW-0963">Cytoplasm</keyword>
<keyword id="KW-0436">Ligase</keyword>
<keyword id="KW-0547">Nucleotide-binding</keyword>
<keyword id="KW-0648">Protein biosynthesis</keyword>
<keyword id="KW-1185">Reference proteome</keyword>
<dbReference type="EC" id="6.1.1.4" evidence="1"/>
<dbReference type="EMBL" id="AE015927">
    <property type="protein sequence ID" value="AAO34977.1"/>
    <property type="status" value="ALT_INIT"/>
    <property type="molecule type" value="Genomic_DNA"/>
</dbReference>
<dbReference type="RefSeq" id="WP_035110983.1">
    <property type="nucleotide sequence ID" value="NC_004557.1"/>
</dbReference>
<dbReference type="SMR" id="Q898V2"/>
<dbReference type="STRING" id="212717.CTC_00337"/>
<dbReference type="GeneID" id="24254654"/>
<dbReference type="KEGG" id="ctc:CTC_00337"/>
<dbReference type="HOGENOM" id="CLU_004427_0_0_9"/>
<dbReference type="OrthoDB" id="9810365at2"/>
<dbReference type="Proteomes" id="UP000001412">
    <property type="component" value="Chromosome"/>
</dbReference>
<dbReference type="GO" id="GO:0005829">
    <property type="term" value="C:cytosol"/>
    <property type="evidence" value="ECO:0007669"/>
    <property type="project" value="TreeGrafter"/>
</dbReference>
<dbReference type="GO" id="GO:0002161">
    <property type="term" value="F:aminoacyl-tRNA deacylase activity"/>
    <property type="evidence" value="ECO:0007669"/>
    <property type="project" value="InterPro"/>
</dbReference>
<dbReference type="GO" id="GO:0005524">
    <property type="term" value="F:ATP binding"/>
    <property type="evidence" value="ECO:0007669"/>
    <property type="project" value="UniProtKB-UniRule"/>
</dbReference>
<dbReference type="GO" id="GO:0004823">
    <property type="term" value="F:leucine-tRNA ligase activity"/>
    <property type="evidence" value="ECO:0007669"/>
    <property type="project" value="UniProtKB-UniRule"/>
</dbReference>
<dbReference type="GO" id="GO:0006429">
    <property type="term" value="P:leucyl-tRNA aminoacylation"/>
    <property type="evidence" value="ECO:0007669"/>
    <property type="project" value="UniProtKB-UniRule"/>
</dbReference>
<dbReference type="CDD" id="cd07958">
    <property type="entry name" value="Anticodon_Ia_Leu_BEm"/>
    <property type="match status" value="1"/>
</dbReference>
<dbReference type="CDD" id="cd00812">
    <property type="entry name" value="LeuRS_core"/>
    <property type="match status" value="1"/>
</dbReference>
<dbReference type="FunFam" id="1.10.730.10:FF:000002">
    <property type="entry name" value="Leucine--tRNA ligase"/>
    <property type="match status" value="1"/>
</dbReference>
<dbReference type="FunFam" id="3.10.20.590:FF:000001">
    <property type="entry name" value="Leucine--tRNA ligase"/>
    <property type="match status" value="1"/>
</dbReference>
<dbReference type="FunFam" id="3.40.50.620:FF:000003">
    <property type="entry name" value="Leucine--tRNA ligase"/>
    <property type="match status" value="1"/>
</dbReference>
<dbReference type="FunFam" id="3.40.50.620:FF:000056">
    <property type="entry name" value="Leucine--tRNA ligase"/>
    <property type="match status" value="1"/>
</dbReference>
<dbReference type="Gene3D" id="3.10.20.590">
    <property type="match status" value="1"/>
</dbReference>
<dbReference type="Gene3D" id="3.40.50.620">
    <property type="entry name" value="HUPs"/>
    <property type="match status" value="2"/>
</dbReference>
<dbReference type="Gene3D" id="1.10.730.10">
    <property type="entry name" value="Isoleucyl-tRNA Synthetase, Domain 1"/>
    <property type="match status" value="1"/>
</dbReference>
<dbReference type="HAMAP" id="MF_00049_B">
    <property type="entry name" value="Leu_tRNA_synth_B"/>
    <property type="match status" value="1"/>
</dbReference>
<dbReference type="InterPro" id="IPR002300">
    <property type="entry name" value="aa-tRNA-synth_Ia"/>
</dbReference>
<dbReference type="InterPro" id="IPR002302">
    <property type="entry name" value="Leu-tRNA-ligase"/>
</dbReference>
<dbReference type="InterPro" id="IPR025709">
    <property type="entry name" value="Leu_tRNA-synth_edit"/>
</dbReference>
<dbReference type="InterPro" id="IPR013155">
    <property type="entry name" value="M/V/L/I-tRNA-synth_anticd-bd"/>
</dbReference>
<dbReference type="InterPro" id="IPR015413">
    <property type="entry name" value="Methionyl/Leucyl_tRNA_Synth"/>
</dbReference>
<dbReference type="InterPro" id="IPR014729">
    <property type="entry name" value="Rossmann-like_a/b/a_fold"/>
</dbReference>
<dbReference type="InterPro" id="IPR009080">
    <property type="entry name" value="tRNAsynth_Ia_anticodon-bd"/>
</dbReference>
<dbReference type="InterPro" id="IPR009008">
    <property type="entry name" value="Val/Leu/Ile-tRNA-synth_edit"/>
</dbReference>
<dbReference type="NCBIfam" id="TIGR00396">
    <property type="entry name" value="leuS_bact"/>
    <property type="match status" value="1"/>
</dbReference>
<dbReference type="PANTHER" id="PTHR43740:SF2">
    <property type="entry name" value="LEUCINE--TRNA LIGASE, MITOCHONDRIAL"/>
    <property type="match status" value="1"/>
</dbReference>
<dbReference type="PANTHER" id="PTHR43740">
    <property type="entry name" value="LEUCYL-TRNA SYNTHETASE"/>
    <property type="match status" value="1"/>
</dbReference>
<dbReference type="Pfam" id="PF08264">
    <property type="entry name" value="Anticodon_1"/>
    <property type="match status" value="1"/>
</dbReference>
<dbReference type="Pfam" id="PF00133">
    <property type="entry name" value="tRNA-synt_1"/>
    <property type="match status" value="1"/>
</dbReference>
<dbReference type="Pfam" id="PF13603">
    <property type="entry name" value="tRNA-synt_1_2"/>
    <property type="match status" value="1"/>
</dbReference>
<dbReference type="Pfam" id="PF09334">
    <property type="entry name" value="tRNA-synt_1g"/>
    <property type="match status" value="1"/>
</dbReference>
<dbReference type="PRINTS" id="PR00985">
    <property type="entry name" value="TRNASYNTHLEU"/>
</dbReference>
<dbReference type="SUPFAM" id="SSF47323">
    <property type="entry name" value="Anticodon-binding domain of a subclass of class I aminoacyl-tRNA synthetases"/>
    <property type="match status" value="1"/>
</dbReference>
<dbReference type="SUPFAM" id="SSF52374">
    <property type="entry name" value="Nucleotidylyl transferase"/>
    <property type="match status" value="1"/>
</dbReference>
<dbReference type="SUPFAM" id="SSF50677">
    <property type="entry name" value="ValRS/IleRS/LeuRS editing domain"/>
    <property type="match status" value="1"/>
</dbReference>
<evidence type="ECO:0000255" key="1">
    <source>
        <dbReference type="HAMAP-Rule" id="MF_00049"/>
    </source>
</evidence>
<evidence type="ECO:0000305" key="2"/>
<organism>
    <name type="scientific">Clostridium tetani (strain Massachusetts / E88)</name>
    <dbReference type="NCBI Taxonomy" id="212717"/>
    <lineage>
        <taxon>Bacteria</taxon>
        <taxon>Bacillati</taxon>
        <taxon>Bacillota</taxon>
        <taxon>Clostridia</taxon>
        <taxon>Eubacteriales</taxon>
        <taxon>Clostridiaceae</taxon>
        <taxon>Clostridium</taxon>
    </lineage>
</organism>
<comment type="catalytic activity">
    <reaction evidence="1">
        <text>tRNA(Leu) + L-leucine + ATP = L-leucyl-tRNA(Leu) + AMP + diphosphate</text>
        <dbReference type="Rhea" id="RHEA:11688"/>
        <dbReference type="Rhea" id="RHEA-COMP:9613"/>
        <dbReference type="Rhea" id="RHEA-COMP:9622"/>
        <dbReference type="ChEBI" id="CHEBI:30616"/>
        <dbReference type="ChEBI" id="CHEBI:33019"/>
        <dbReference type="ChEBI" id="CHEBI:57427"/>
        <dbReference type="ChEBI" id="CHEBI:78442"/>
        <dbReference type="ChEBI" id="CHEBI:78494"/>
        <dbReference type="ChEBI" id="CHEBI:456215"/>
        <dbReference type="EC" id="6.1.1.4"/>
    </reaction>
</comment>
<comment type="subcellular location">
    <subcellularLocation>
        <location evidence="1">Cytoplasm</location>
    </subcellularLocation>
</comment>
<comment type="similarity">
    <text evidence="1">Belongs to the class-I aminoacyl-tRNA synthetase family.</text>
</comment>
<comment type="sequence caution" evidence="2">
    <conflict type="erroneous initiation">
        <sequence resource="EMBL-CDS" id="AAO34977"/>
    </conflict>
</comment>